<keyword id="KW-0007">Acetylation</keyword>
<keyword id="KW-0507">mRNA processing</keyword>
<keyword id="KW-0508">mRNA splicing</keyword>
<keyword id="KW-0509">mRNA transport</keyword>
<keyword id="KW-0539">Nucleus</keyword>
<keyword id="KW-1185">Reference proteome</keyword>
<keyword id="KW-0694">RNA-binding</keyword>
<keyword id="KW-0747">Spliceosome</keyword>
<keyword id="KW-0813">Transport</keyword>
<protein>
    <recommendedName>
        <fullName>Protein mago nashi homolog 2</fullName>
    </recommendedName>
</protein>
<accession>Q0VC92</accession>
<proteinExistence type="evidence at transcript level"/>
<name>MGN2_BOVIN</name>
<gene>
    <name type="primary">MAGOHB</name>
    <name type="synonym">MAGOH2</name>
</gene>
<reference key="1">
    <citation type="submission" date="2006-08" db="EMBL/GenBank/DDBJ databases">
        <authorList>
            <consortium name="NIH - Mammalian Gene Collection (MGC) project"/>
        </authorList>
    </citation>
    <scope>NUCLEOTIDE SEQUENCE [LARGE SCALE MRNA]</scope>
    <source>
        <strain>Hereford</strain>
        <tissue>Fetal spinal cord</tissue>
    </source>
</reference>
<feature type="initiator methionine" description="Removed" evidence="1">
    <location>
        <position position="1"/>
    </location>
</feature>
<feature type="chain" id="PRO_0000323380" description="Protein mago nashi homolog 2">
    <location>
        <begin position="2"/>
        <end position="148"/>
    </location>
</feature>
<feature type="modified residue" description="N-acetylalanine" evidence="1">
    <location>
        <position position="2"/>
    </location>
</feature>
<dbReference type="EMBL" id="BC120291">
    <property type="protein sequence ID" value="AAI20292.1"/>
    <property type="molecule type" value="mRNA"/>
</dbReference>
<dbReference type="RefSeq" id="NP_001069720.1">
    <property type="nucleotide sequence ID" value="NM_001076252.1"/>
</dbReference>
<dbReference type="SMR" id="Q0VC92"/>
<dbReference type="FunCoup" id="Q0VC92">
    <property type="interactions" value="4129"/>
</dbReference>
<dbReference type="IntAct" id="Q0VC92">
    <property type="interactions" value="2"/>
</dbReference>
<dbReference type="STRING" id="9913.ENSBTAP00000025615"/>
<dbReference type="PaxDb" id="9913-ENSBTAP00000025615"/>
<dbReference type="Ensembl" id="ENSBTAT00000025615.4">
    <property type="protein sequence ID" value="ENSBTAP00000025615.3"/>
    <property type="gene ID" value="ENSBTAG00000019235.4"/>
</dbReference>
<dbReference type="GeneID" id="541013"/>
<dbReference type="KEGG" id="bta:541013"/>
<dbReference type="CTD" id="55110"/>
<dbReference type="VEuPathDB" id="HostDB:ENSBTAG00000019235"/>
<dbReference type="VGNC" id="VGNC:111249">
    <property type="gene designation" value="MAGOHB"/>
</dbReference>
<dbReference type="eggNOG" id="KOG3392">
    <property type="taxonomic scope" value="Eukaryota"/>
</dbReference>
<dbReference type="GeneTree" id="ENSGT00390000003156"/>
<dbReference type="HOGENOM" id="CLU_109497_1_1_1"/>
<dbReference type="InParanoid" id="Q0VC92"/>
<dbReference type="OMA" id="IRKEMWI"/>
<dbReference type="OrthoDB" id="6495301at2759"/>
<dbReference type="TreeFam" id="TF300128"/>
<dbReference type="Reactome" id="R-BTA-159236">
    <property type="pathway name" value="Transport of Mature mRNA derived from an Intron-Containing Transcript"/>
</dbReference>
<dbReference type="Reactome" id="R-BTA-72163">
    <property type="pathway name" value="mRNA Splicing - Major Pathway"/>
</dbReference>
<dbReference type="Reactome" id="R-BTA-72187">
    <property type="pathway name" value="mRNA 3'-end processing"/>
</dbReference>
<dbReference type="Reactome" id="R-BTA-73856">
    <property type="pathway name" value="RNA Polymerase II Transcription Termination"/>
</dbReference>
<dbReference type="Reactome" id="R-BTA-975957">
    <property type="pathway name" value="Nonsense Mediated Decay (NMD) enhanced by the Exon Junction Complex (EJC)"/>
</dbReference>
<dbReference type="Proteomes" id="UP000009136">
    <property type="component" value="Chromosome 5"/>
</dbReference>
<dbReference type="Bgee" id="ENSBTAG00000019235">
    <property type="expression patterns" value="Expressed in oocyte and 106 other cell types or tissues"/>
</dbReference>
<dbReference type="GO" id="GO:0071013">
    <property type="term" value="C:catalytic step 2 spliceosome"/>
    <property type="evidence" value="ECO:0000318"/>
    <property type="project" value="GO_Central"/>
</dbReference>
<dbReference type="GO" id="GO:0035145">
    <property type="term" value="C:exon-exon junction complex"/>
    <property type="evidence" value="ECO:0000318"/>
    <property type="project" value="GO_Central"/>
</dbReference>
<dbReference type="GO" id="GO:0005634">
    <property type="term" value="C:nucleus"/>
    <property type="evidence" value="ECO:0000250"/>
    <property type="project" value="UniProtKB"/>
</dbReference>
<dbReference type="GO" id="GO:0071006">
    <property type="term" value="C:U2-type catalytic step 1 spliceosome"/>
    <property type="evidence" value="ECO:0000250"/>
    <property type="project" value="UniProtKB"/>
</dbReference>
<dbReference type="GO" id="GO:0071005">
    <property type="term" value="C:U2-type precatalytic spliceosome"/>
    <property type="evidence" value="ECO:0000250"/>
    <property type="project" value="UniProtKB"/>
</dbReference>
<dbReference type="GO" id="GO:0003723">
    <property type="term" value="F:RNA binding"/>
    <property type="evidence" value="ECO:0007669"/>
    <property type="project" value="UniProtKB-KW"/>
</dbReference>
<dbReference type="GO" id="GO:0000398">
    <property type="term" value="P:mRNA splicing, via spliceosome"/>
    <property type="evidence" value="ECO:0000250"/>
    <property type="project" value="UniProtKB"/>
</dbReference>
<dbReference type="GO" id="GO:0051028">
    <property type="term" value="P:mRNA transport"/>
    <property type="evidence" value="ECO:0007669"/>
    <property type="project" value="UniProtKB-KW"/>
</dbReference>
<dbReference type="GO" id="GO:0008380">
    <property type="term" value="P:RNA splicing"/>
    <property type="evidence" value="ECO:0000318"/>
    <property type="project" value="GO_Central"/>
</dbReference>
<dbReference type="CDD" id="cd11295">
    <property type="entry name" value="Mago_nashi"/>
    <property type="match status" value="1"/>
</dbReference>
<dbReference type="FunFam" id="3.30.1560.10:FF:000001">
    <property type="entry name" value="Protein mago nashi homolog"/>
    <property type="match status" value="1"/>
</dbReference>
<dbReference type="Gene3D" id="3.30.1560.10">
    <property type="entry name" value="Mago nashi"/>
    <property type="match status" value="1"/>
</dbReference>
<dbReference type="InterPro" id="IPR004023">
    <property type="entry name" value="Mago_nashi"/>
</dbReference>
<dbReference type="InterPro" id="IPR036605">
    <property type="entry name" value="Mago_nashi_sf"/>
</dbReference>
<dbReference type="PANTHER" id="PTHR12638:SF0">
    <property type="entry name" value="MAGO HOMOLOG, EXON JUNCTION COMPLEX SUBUNIT-RELATED"/>
    <property type="match status" value="1"/>
</dbReference>
<dbReference type="PANTHER" id="PTHR12638">
    <property type="entry name" value="PROTEIN MAGO NASHI HOMOLOG"/>
    <property type="match status" value="1"/>
</dbReference>
<dbReference type="Pfam" id="PF02792">
    <property type="entry name" value="Mago_nashi"/>
    <property type="match status" value="1"/>
</dbReference>
<dbReference type="SUPFAM" id="SSF89817">
    <property type="entry name" value="Mago nashi protein"/>
    <property type="match status" value="1"/>
</dbReference>
<sequence length="148" mass="17308">MAMASDFYLRYYVGHKGKFGHEFLEFEFRPDGKLRYANNSNYKNDVMIRKEAYVHKSVMEELKRIIDDSEITKEDDALWPPPDRVGRQELEIVIGDEHISFTTSKIGSLIDVNQSKDPEGLRVFYYLVQDLKCLVFSLIGLHFKIKPI</sequence>
<organism>
    <name type="scientific">Bos taurus</name>
    <name type="common">Bovine</name>
    <dbReference type="NCBI Taxonomy" id="9913"/>
    <lineage>
        <taxon>Eukaryota</taxon>
        <taxon>Metazoa</taxon>
        <taxon>Chordata</taxon>
        <taxon>Craniata</taxon>
        <taxon>Vertebrata</taxon>
        <taxon>Euteleostomi</taxon>
        <taxon>Mammalia</taxon>
        <taxon>Eutheria</taxon>
        <taxon>Laurasiatheria</taxon>
        <taxon>Artiodactyla</taxon>
        <taxon>Ruminantia</taxon>
        <taxon>Pecora</taxon>
        <taxon>Bovidae</taxon>
        <taxon>Bovinae</taxon>
        <taxon>Bos</taxon>
    </lineage>
</organism>
<comment type="function">
    <text evidence="1">Required for pre-mRNA splicing as component of the spliceosome. Plays a redundant role with MAGOH in the exon junction complex and in the nonsense-mediated decay (NMD) pathway.</text>
</comment>
<comment type="subunit">
    <text evidence="1">Component of the pre-catalytic, catalytic and post-catalytic spliceosome complexes. Heterodimer with RBM8A. Core component of the mRNA splicing-dependent exon junction complex (EJC); the core complex contains CASC3, EIF4A3, MAGOH or MAGOHB, and RBM8A.</text>
</comment>
<comment type="subcellular location">
    <subcellularLocation>
        <location evidence="1">Nucleus</location>
    </subcellularLocation>
</comment>
<comment type="similarity">
    <text evidence="2">Belongs to the mago nashi family.</text>
</comment>
<evidence type="ECO:0000250" key="1">
    <source>
        <dbReference type="UniProtKB" id="Q96A72"/>
    </source>
</evidence>
<evidence type="ECO:0000305" key="2"/>